<name>HEMA_I82A6</name>
<organism>
    <name type="scientific">Influenza A virus (strain A/Duck/Hokkaido/21/1982 H3N8)</name>
    <dbReference type="NCBI Taxonomy" id="11361"/>
    <lineage>
        <taxon>Viruses</taxon>
        <taxon>Riboviria</taxon>
        <taxon>Orthornavirae</taxon>
        <taxon>Negarnaviricota</taxon>
        <taxon>Polyploviricotina</taxon>
        <taxon>Insthoviricetes</taxon>
        <taxon>Articulavirales</taxon>
        <taxon>Orthomyxoviridae</taxon>
        <taxon>Alphainfluenzavirus</taxon>
        <taxon>Alphainfluenzavirus influenzae</taxon>
        <taxon>Influenza A virus</taxon>
    </lineage>
</organism>
<feature type="chain" id="PRO_0000440848" description="Hemagglutinin HA1 chain" evidence="1">
    <location>
        <begin position="1"/>
        <end position="329"/>
    </location>
</feature>
<feature type="chain" id="PRO_0000038925" description="Hemagglutinin HA2 chain" evidence="1">
    <location>
        <begin position="330"/>
        <end position="550"/>
    </location>
</feature>
<feature type="topological domain" description="Extracellular" evidence="1">
    <location>
        <begin position="1"/>
        <end position="514"/>
    </location>
</feature>
<feature type="transmembrane region" description="Helical" evidence="1">
    <location>
        <begin position="515"/>
        <end position="535"/>
    </location>
</feature>
<feature type="topological domain" description="Cytoplasmic" evidence="1">
    <location>
        <begin position="536"/>
        <end position="550"/>
    </location>
</feature>
<feature type="site" description="Cleavage; by host" evidence="1">
    <location>
        <begin position="329"/>
        <end position="330"/>
    </location>
</feature>
<feature type="lipid moiety-binding region" description="S-palmitoyl cysteine; by host" evidence="1">
    <location>
        <position position="546"/>
    </location>
</feature>
<feature type="lipid moiety-binding region" description="S-palmitoyl cysteine; by host" evidence="1">
    <location>
        <position position="549"/>
    </location>
</feature>
<feature type="glycosylation site" description="N-linked (GlcNAc...) asparagine; by host" evidence="1">
    <location>
        <position position="7"/>
    </location>
</feature>
<feature type="glycosylation site" description="N-linked (GlcNAc...) asparagine; by host" evidence="1">
    <location>
        <position position="8"/>
    </location>
</feature>
<feature type="glycosylation site" description="N-linked (GlcNAc...) asparagine; by host" evidence="1">
    <location>
        <position position="22"/>
    </location>
</feature>
<feature type="glycosylation site" description="N-linked (GlcNAc...) asparagine; by host" evidence="1">
    <location>
        <position position="38"/>
    </location>
</feature>
<feature type="glycosylation site" description="N-linked (GlcNAc...) asparagine; by host" evidence="1">
    <location>
        <position position="165"/>
    </location>
</feature>
<feature type="glycosylation site" description="N-linked (GlcNAc...) asparagine; by host" evidence="1">
    <location>
        <position position="285"/>
    </location>
</feature>
<feature type="glycosylation site" description="N-linked (GlcNAc...) asparagine; by host" evidence="1">
    <location>
        <position position="483"/>
    </location>
</feature>
<feature type="disulfide bond" description="Interchain (between HA1 and HA2 chains)" evidence="1">
    <location>
        <begin position="14"/>
        <end position="466"/>
    </location>
</feature>
<feature type="disulfide bond" evidence="1">
    <location>
        <begin position="52"/>
        <end position="277"/>
    </location>
</feature>
<feature type="disulfide bond" evidence="1">
    <location>
        <begin position="64"/>
        <end position="76"/>
    </location>
</feature>
<feature type="disulfide bond" evidence="1">
    <location>
        <begin position="97"/>
        <end position="139"/>
    </location>
</feature>
<feature type="disulfide bond" evidence="1">
    <location>
        <begin position="281"/>
        <end position="305"/>
    </location>
</feature>
<feature type="disulfide bond" evidence="1">
    <location>
        <begin position="473"/>
        <end position="477"/>
    </location>
</feature>
<feature type="non-terminal residue">
    <location>
        <position position="1"/>
    </location>
</feature>
<proteinExistence type="inferred from homology"/>
<dbReference type="EMBL" id="M16741">
    <property type="protein sequence ID" value="AAA43147.1"/>
    <property type="molecule type" value="Genomic_RNA"/>
</dbReference>
<dbReference type="PIR" id="E27813">
    <property type="entry name" value="HMIV21"/>
</dbReference>
<dbReference type="SMR" id="P12586"/>
<dbReference type="GlyCosmos" id="P12586">
    <property type="glycosylation" value="7 sites, No reported glycans"/>
</dbReference>
<dbReference type="GO" id="GO:0020002">
    <property type="term" value="C:host cell plasma membrane"/>
    <property type="evidence" value="ECO:0007669"/>
    <property type="project" value="UniProtKB-SubCell"/>
</dbReference>
<dbReference type="GO" id="GO:0016020">
    <property type="term" value="C:membrane"/>
    <property type="evidence" value="ECO:0007669"/>
    <property type="project" value="UniProtKB-KW"/>
</dbReference>
<dbReference type="GO" id="GO:0019031">
    <property type="term" value="C:viral envelope"/>
    <property type="evidence" value="ECO:0007669"/>
    <property type="project" value="UniProtKB-KW"/>
</dbReference>
<dbReference type="GO" id="GO:0055036">
    <property type="term" value="C:virion membrane"/>
    <property type="evidence" value="ECO:0007669"/>
    <property type="project" value="UniProtKB-SubCell"/>
</dbReference>
<dbReference type="GO" id="GO:0046789">
    <property type="term" value="F:host cell surface receptor binding"/>
    <property type="evidence" value="ECO:0007669"/>
    <property type="project" value="InterPro"/>
</dbReference>
<dbReference type="GO" id="GO:0075512">
    <property type="term" value="P:clathrin-dependent endocytosis of virus by host cell"/>
    <property type="evidence" value="ECO:0007669"/>
    <property type="project" value="UniProtKB-KW"/>
</dbReference>
<dbReference type="GO" id="GO:0039654">
    <property type="term" value="P:fusion of virus membrane with host endosome membrane"/>
    <property type="evidence" value="ECO:0007669"/>
    <property type="project" value="UniProtKB-KW"/>
</dbReference>
<dbReference type="GO" id="GO:0019064">
    <property type="term" value="P:fusion of virus membrane with host plasma membrane"/>
    <property type="evidence" value="ECO:0007669"/>
    <property type="project" value="InterPro"/>
</dbReference>
<dbReference type="GO" id="GO:0019062">
    <property type="term" value="P:virion attachment to host cell"/>
    <property type="evidence" value="ECO:0007669"/>
    <property type="project" value="UniProtKB-KW"/>
</dbReference>
<dbReference type="FunFam" id="3.90.20.10:FF:000001">
    <property type="entry name" value="Hemagglutinin"/>
    <property type="match status" value="1"/>
</dbReference>
<dbReference type="FunFam" id="3.90.209.20:FF:000001">
    <property type="entry name" value="Hemagglutinin"/>
    <property type="match status" value="1"/>
</dbReference>
<dbReference type="Gene3D" id="3.90.20.10">
    <property type="match status" value="1"/>
</dbReference>
<dbReference type="Gene3D" id="3.90.209.20">
    <property type="match status" value="1"/>
</dbReference>
<dbReference type="HAMAP" id="MF_04072">
    <property type="entry name" value="INFV_HEMA"/>
    <property type="match status" value="1"/>
</dbReference>
<dbReference type="InterPro" id="IPR008980">
    <property type="entry name" value="Capsid_hemagglutn"/>
</dbReference>
<dbReference type="InterPro" id="IPR013828">
    <property type="entry name" value="Hemagglutn_HA1_a/b_dom_sf"/>
</dbReference>
<dbReference type="InterPro" id="IPR000149">
    <property type="entry name" value="Hemagglutn_influenz_A"/>
</dbReference>
<dbReference type="InterPro" id="IPR001364">
    <property type="entry name" value="Hemagglutn_influenz_A/B"/>
</dbReference>
<dbReference type="Pfam" id="PF00509">
    <property type="entry name" value="Hemagglutinin"/>
    <property type="match status" value="1"/>
</dbReference>
<dbReference type="PRINTS" id="PR00330">
    <property type="entry name" value="HEMAGGLUTN1"/>
</dbReference>
<dbReference type="PRINTS" id="PR00329">
    <property type="entry name" value="HEMAGGLUTN12"/>
</dbReference>
<dbReference type="SUPFAM" id="SSF58064">
    <property type="entry name" value="Influenza hemagglutinin (stalk)"/>
    <property type="match status" value="1"/>
</dbReference>
<dbReference type="SUPFAM" id="SSF49818">
    <property type="entry name" value="Viral protein domain"/>
    <property type="match status" value="1"/>
</dbReference>
<protein>
    <recommendedName>
        <fullName evidence="1">Hemagglutinin</fullName>
    </recommendedName>
    <component>
        <recommendedName>
            <fullName evidence="1">Hemagglutinin HA1 chain</fullName>
        </recommendedName>
    </component>
    <component>
        <recommendedName>
            <fullName evidence="1">Hemagglutinin HA2 chain</fullName>
        </recommendedName>
    </component>
</protein>
<organismHost>
    <name type="scientific">Aves</name>
    <dbReference type="NCBI Taxonomy" id="8782"/>
</organismHost>
<organismHost>
    <name type="scientific">Equus caballus</name>
    <name type="common">Horse</name>
    <dbReference type="NCBI Taxonomy" id="9796"/>
</organismHost>
<evidence type="ECO:0000255" key="1">
    <source>
        <dbReference type="HAMAP-Rule" id="MF_04072"/>
    </source>
</evidence>
<sequence length="550" mass="61857">QDYSENNNSTATLCLGHHAVPNGTIVKTITDDQIEVTNATELVQSSSTGKICNNPHRILDGRDCTLIDALLGDPHCDVFQDETWDLYVERSSAFSNCYPYDVSDYASLRSLVASSGTLEFLTEGFTWTGVTQNGGSNACKRGPASGFFSRLNWLTKSGSTYPVLNVTMPNNDNFDKLYVWGVHHPSTNQEQTDLYVQASGRVTVSTRRSQQTIIPNIGSRPWVRGQSGRISIYWTIVKPGDVLVINSNGNLIAPRGYFKMRTGKSSIMRSDAPIDTCISECVTPNGSIPNDKPFQNVNKITYGACLKYVKQSTLKLATGMRNVPEKQTRGLFGAIAGFIENGWEGMIDGWYGFRHQNSEGTGQAADLKSTQAAIDQINGKLNRVIEKKNEKFHQIEKEFSEVEGRIQDLEKYVEDTKIDLWSYNAELLVALENQHTIDLTDSEMNKLFEKTRRQLRENAEDMGNGCFKIYHKCDNACIESIRNGTYDHDIYRDEALNNRFQIKGVELKSGYKNWILWISFAISCFLLCVVLLGFIMWAYQRGNIRCNICI</sequence>
<comment type="function">
    <text evidence="1">Binds to sialic acid-containing receptors on the cell surface, bringing about the attachment of the virus particle to the cell. This attachment induces virion internalization either through clathrin-dependent endocytosis or through clathrin- and caveolin-independent pathway. Plays a major role in the determination of host range restriction and virulence. Class I viral fusion protein. Responsible for penetration of the virus into the cell cytoplasm by mediating the fusion of the membrane of the endocytosed virus particle with the endosomal membrane. Low pH in endosomes induces an irreversible conformational change in HA2, releasing the fusion hydrophobic peptide. Several trimers are required to form a competent fusion pore.</text>
</comment>
<comment type="subunit">
    <text evidence="1">Homotrimer of disulfide-linked HA1-HA2.</text>
</comment>
<comment type="subcellular location">
    <subcellularLocation>
        <location evidence="1">Virion membrane</location>
        <topology evidence="1">Single-pass type I membrane protein</topology>
    </subcellularLocation>
    <subcellularLocation>
        <location evidence="1">Host apical cell membrane</location>
        <topology evidence="1">Single-pass type I membrane protein</topology>
    </subcellularLocation>
    <text evidence="1">Targeted to the apical plasma membrane in epithelial polarized cells through a signal present in the transmembrane domain. Associated with glycosphingolipid- and cholesterol-enriched detergent-resistant lipid rafts.</text>
</comment>
<comment type="PTM">
    <text evidence="1">Palmitoylated.</text>
</comment>
<comment type="PTM">
    <text evidence="1">In natural infection, inactive HA is matured into HA1 and HA2 outside the cell by one or more trypsin-like, arginine-specific endoprotease secreted by the bronchial epithelial cells. One identified protease that may be involved in this process is secreted in lungs by club cells.</text>
</comment>
<comment type="miscellaneous">
    <text>Major glycoprotein, comprises over 80% of the envelope proteins present in virus particle.</text>
</comment>
<comment type="miscellaneous">
    <text>The extent of infection into host organism is determined by HA. Influenza viruses bud from the apical surface of polarized epithelial cells (e.g. bronchial epithelial cells) into lumen of lungs and are therefore usually pneumotropic. The reason is that HA is cleaved by tryptase clara which is restricted to lungs. However, HAs of H5 and H7 pantropic avian viruses subtypes can be cleaved by furin and subtilisin-type enzymes, allowing the virus to grow in other organs than lungs.</text>
</comment>
<comment type="miscellaneous">
    <text>The influenza A genome consist of 8 RNA segments. Genetic variation of hemagglutinin and/or neuraminidase genes results in the emergence of new influenza strains. The mechanism of variation can be the result of point mutations or the result of genetic reassortment between segments of two different strains.</text>
</comment>
<comment type="similarity">
    <text evidence="1">Belongs to the influenza viruses hemagglutinin family.</text>
</comment>
<reference key="1">
    <citation type="journal article" date="1987" name="Virology">
        <title>Antigenic and genetic conservation of H3 influenza virus in wild ducks.</title>
        <authorList>
            <person name="Kida H."/>
            <person name="Kawaoka Y."/>
            <person name="Naeve C.W."/>
            <person name="Webster R.G."/>
        </authorList>
    </citation>
    <scope>NUCLEOTIDE SEQUENCE [GENOMIC RNA]</scope>
</reference>
<gene>
    <name evidence="1" type="primary">HA</name>
</gene>
<keyword id="KW-1167">Clathrin- and caveolin-independent endocytosis of virus by host</keyword>
<keyword id="KW-1165">Clathrin-mediated endocytosis of virus by host</keyword>
<keyword id="KW-1015">Disulfide bond</keyword>
<keyword id="KW-1170">Fusion of virus membrane with host endosomal membrane</keyword>
<keyword id="KW-1168">Fusion of virus membrane with host membrane</keyword>
<keyword id="KW-0325">Glycoprotein</keyword>
<keyword id="KW-0348">Hemagglutinin</keyword>
<keyword id="KW-1032">Host cell membrane</keyword>
<keyword id="KW-1043">Host membrane</keyword>
<keyword id="KW-0945">Host-virus interaction</keyword>
<keyword id="KW-0449">Lipoprotein</keyword>
<keyword id="KW-0472">Membrane</keyword>
<keyword id="KW-0564">Palmitate</keyword>
<keyword id="KW-0812">Transmembrane</keyword>
<keyword id="KW-1133">Transmembrane helix</keyword>
<keyword id="KW-1161">Viral attachment to host cell</keyword>
<keyword id="KW-0261">Viral envelope protein</keyword>
<keyword id="KW-1162">Viral penetration into host cytoplasm</keyword>
<keyword id="KW-0946">Virion</keyword>
<keyword id="KW-1164">Virus endocytosis by host</keyword>
<keyword id="KW-1160">Virus entry into host cell</keyword>
<accession>P12586</accession>
<accession>Q84015</accession>
<accession>Q84016</accession>